<proteinExistence type="evidence at protein level"/>
<gene>
    <name type="primary">TMEM19</name>
</gene>
<protein>
    <recommendedName>
        <fullName>Transmembrane protein 19</fullName>
    </recommendedName>
</protein>
<accession>Q96HH6</accession>
<accession>B2RDL2</accession>
<accession>Q53FY3</accession>
<accession>Q9NV41</accession>
<organism>
    <name type="scientific">Homo sapiens</name>
    <name type="common">Human</name>
    <dbReference type="NCBI Taxonomy" id="9606"/>
    <lineage>
        <taxon>Eukaryota</taxon>
        <taxon>Metazoa</taxon>
        <taxon>Chordata</taxon>
        <taxon>Craniata</taxon>
        <taxon>Vertebrata</taxon>
        <taxon>Euteleostomi</taxon>
        <taxon>Mammalia</taxon>
        <taxon>Eutheria</taxon>
        <taxon>Euarchontoglires</taxon>
        <taxon>Primates</taxon>
        <taxon>Haplorrhini</taxon>
        <taxon>Catarrhini</taxon>
        <taxon>Hominidae</taxon>
        <taxon>Homo</taxon>
    </lineage>
</organism>
<keyword id="KW-0025">Alternative splicing</keyword>
<keyword id="KW-0472">Membrane</keyword>
<keyword id="KW-1267">Proteomics identification</keyword>
<keyword id="KW-1185">Reference proteome</keyword>
<keyword id="KW-0812">Transmembrane</keyword>
<keyword id="KW-1133">Transmembrane helix</keyword>
<reference key="1">
    <citation type="journal article" date="2004" name="Nat. Genet.">
        <title>Complete sequencing and characterization of 21,243 full-length human cDNAs.</title>
        <authorList>
            <person name="Ota T."/>
            <person name="Suzuki Y."/>
            <person name="Nishikawa T."/>
            <person name="Otsuki T."/>
            <person name="Sugiyama T."/>
            <person name="Irie R."/>
            <person name="Wakamatsu A."/>
            <person name="Hayashi K."/>
            <person name="Sato H."/>
            <person name="Nagai K."/>
            <person name="Kimura K."/>
            <person name="Makita H."/>
            <person name="Sekine M."/>
            <person name="Obayashi M."/>
            <person name="Nishi T."/>
            <person name="Shibahara T."/>
            <person name="Tanaka T."/>
            <person name="Ishii S."/>
            <person name="Yamamoto J."/>
            <person name="Saito K."/>
            <person name="Kawai Y."/>
            <person name="Isono Y."/>
            <person name="Nakamura Y."/>
            <person name="Nagahari K."/>
            <person name="Murakami K."/>
            <person name="Yasuda T."/>
            <person name="Iwayanagi T."/>
            <person name="Wagatsuma M."/>
            <person name="Shiratori A."/>
            <person name="Sudo H."/>
            <person name="Hosoiri T."/>
            <person name="Kaku Y."/>
            <person name="Kodaira H."/>
            <person name="Kondo H."/>
            <person name="Sugawara M."/>
            <person name="Takahashi M."/>
            <person name="Kanda K."/>
            <person name="Yokoi T."/>
            <person name="Furuya T."/>
            <person name="Kikkawa E."/>
            <person name="Omura Y."/>
            <person name="Abe K."/>
            <person name="Kamihara K."/>
            <person name="Katsuta N."/>
            <person name="Sato K."/>
            <person name="Tanikawa M."/>
            <person name="Yamazaki M."/>
            <person name="Ninomiya K."/>
            <person name="Ishibashi T."/>
            <person name="Yamashita H."/>
            <person name="Murakawa K."/>
            <person name="Fujimori K."/>
            <person name="Tanai H."/>
            <person name="Kimata M."/>
            <person name="Watanabe M."/>
            <person name="Hiraoka S."/>
            <person name="Chiba Y."/>
            <person name="Ishida S."/>
            <person name="Ono Y."/>
            <person name="Takiguchi S."/>
            <person name="Watanabe S."/>
            <person name="Yosida M."/>
            <person name="Hotuta T."/>
            <person name="Kusano J."/>
            <person name="Kanehori K."/>
            <person name="Takahashi-Fujii A."/>
            <person name="Hara H."/>
            <person name="Tanase T.-O."/>
            <person name="Nomura Y."/>
            <person name="Togiya S."/>
            <person name="Komai F."/>
            <person name="Hara R."/>
            <person name="Takeuchi K."/>
            <person name="Arita M."/>
            <person name="Imose N."/>
            <person name="Musashino K."/>
            <person name="Yuuki H."/>
            <person name="Oshima A."/>
            <person name="Sasaki N."/>
            <person name="Aotsuka S."/>
            <person name="Yoshikawa Y."/>
            <person name="Matsunawa H."/>
            <person name="Ichihara T."/>
            <person name="Shiohata N."/>
            <person name="Sano S."/>
            <person name="Moriya S."/>
            <person name="Momiyama H."/>
            <person name="Satoh N."/>
            <person name="Takami S."/>
            <person name="Terashima Y."/>
            <person name="Suzuki O."/>
            <person name="Nakagawa S."/>
            <person name="Senoh A."/>
            <person name="Mizoguchi H."/>
            <person name="Goto Y."/>
            <person name="Shimizu F."/>
            <person name="Wakebe H."/>
            <person name="Hishigaki H."/>
            <person name="Watanabe T."/>
            <person name="Sugiyama A."/>
            <person name="Takemoto M."/>
            <person name="Kawakami B."/>
            <person name="Yamazaki M."/>
            <person name="Watanabe K."/>
            <person name="Kumagai A."/>
            <person name="Itakura S."/>
            <person name="Fukuzumi Y."/>
            <person name="Fujimori Y."/>
            <person name="Komiyama M."/>
            <person name="Tashiro H."/>
            <person name="Tanigami A."/>
            <person name="Fujiwara T."/>
            <person name="Ono T."/>
            <person name="Yamada K."/>
            <person name="Fujii Y."/>
            <person name="Ozaki K."/>
            <person name="Hirao M."/>
            <person name="Ohmori Y."/>
            <person name="Kawabata A."/>
            <person name="Hikiji T."/>
            <person name="Kobatake N."/>
            <person name="Inagaki H."/>
            <person name="Ikema Y."/>
            <person name="Okamoto S."/>
            <person name="Okitani R."/>
            <person name="Kawakami T."/>
            <person name="Noguchi S."/>
            <person name="Itoh T."/>
            <person name="Shigeta K."/>
            <person name="Senba T."/>
            <person name="Matsumura K."/>
            <person name="Nakajima Y."/>
            <person name="Mizuno T."/>
            <person name="Morinaga M."/>
            <person name="Sasaki M."/>
            <person name="Togashi T."/>
            <person name="Oyama M."/>
            <person name="Hata H."/>
            <person name="Watanabe M."/>
            <person name="Komatsu T."/>
            <person name="Mizushima-Sugano J."/>
            <person name="Satoh T."/>
            <person name="Shirai Y."/>
            <person name="Takahashi Y."/>
            <person name="Nakagawa K."/>
            <person name="Okumura K."/>
            <person name="Nagase T."/>
            <person name="Nomura N."/>
            <person name="Kikuchi H."/>
            <person name="Masuho Y."/>
            <person name="Yamashita R."/>
            <person name="Nakai K."/>
            <person name="Yada T."/>
            <person name="Nakamura Y."/>
            <person name="Ohara O."/>
            <person name="Isogai T."/>
            <person name="Sugano S."/>
        </authorList>
    </citation>
    <scope>NUCLEOTIDE SEQUENCE [LARGE SCALE MRNA] (ISOFORMS 1 AND 2)</scope>
    <source>
        <tissue>Ovarian carcinoma</tissue>
        <tissue>Placenta</tissue>
    </source>
</reference>
<reference key="2">
    <citation type="submission" date="2005-04" db="EMBL/GenBank/DDBJ databases">
        <authorList>
            <person name="Suzuki Y."/>
            <person name="Sugano S."/>
            <person name="Totoki Y."/>
            <person name="Toyoda A."/>
            <person name="Takeda T."/>
            <person name="Sakaki Y."/>
            <person name="Tanaka A."/>
            <person name="Yokoyama S."/>
        </authorList>
    </citation>
    <scope>NUCLEOTIDE SEQUENCE [LARGE SCALE MRNA] (ISOFORM 1)</scope>
    <source>
        <tissue>Lung</tissue>
    </source>
</reference>
<reference key="3">
    <citation type="submission" date="2005-07" db="EMBL/GenBank/DDBJ databases">
        <authorList>
            <person name="Mural R.J."/>
            <person name="Istrail S."/>
            <person name="Sutton G.G."/>
            <person name="Florea L."/>
            <person name="Halpern A.L."/>
            <person name="Mobarry C.M."/>
            <person name="Lippert R."/>
            <person name="Walenz B."/>
            <person name="Shatkay H."/>
            <person name="Dew I."/>
            <person name="Miller J.R."/>
            <person name="Flanigan M.J."/>
            <person name="Edwards N.J."/>
            <person name="Bolanos R."/>
            <person name="Fasulo D."/>
            <person name="Halldorsson B.V."/>
            <person name="Hannenhalli S."/>
            <person name="Turner R."/>
            <person name="Yooseph S."/>
            <person name="Lu F."/>
            <person name="Nusskern D.R."/>
            <person name="Shue B.C."/>
            <person name="Zheng X.H."/>
            <person name="Zhong F."/>
            <person name="Delcher A.L."/>
            <person name="Huson D.H."/>
            <person name="Kravitz S.A."/>
            <person name="Mouchard L."/>
            <person name="Reinert K."/>
            <person name="Remington K.A."/>
            <person name="Clark A.G."/>
            <person name="Waterman M.S."/>
            <person name="Eichler E.E."/>
            <person name="Adams M.D."/>
            <person name="Hunkapiller M.W."/>
            <person name="Myers E.W."/>
            <person name="Venter J.C."/>
        </authorList>
    </citation>
    <scope>NUCLEOTIDE SEQUENCE [LARGE SCALE GENOMIC DNA]</scope>
</reference>
<reference key="4">
    <citation type="journal article" date="2004" name="Genome Res.">
        <title>The status, quality, and expansion of the NIH full-length cDNA project: the Mammalian Gene Collection (MGC).</title>
        <authorList>
            <consortium name="The MGC Project Team"/>
        </authorList>
    </citation>
    <scope>NUCLEOTIDE SEQUENCE [LARGE SCALE MRNA] (ISOFORM 1)</scope>
    <source>
        <tissue>Brain</tissue>
    </source>
</reference>
<dbReference type="EMBL" id="AK001798">
    <property type="protein sequence ID" value="BAA91918.1"/>
    <property type="molecule type" value="mRNA"/>
</dbReference>
<dbReference type="EMBL" id="AK223148">
    <property type="protein sequence ID" value="BAD96868.1"/>
    <property type="molecule type" value="mRNA"/>
</dbReference>
<dbReference type="EMBL" id="AK315587">
    <property type="protein sequence ID" value="BAG37959.1"/>
    <property type="molecule type" value="mRNA"/>
</dbReference>
<dbReference type="EMBL" id="CH471054">
    <property type="protein sequence ID" value="EAW97266.1"/>
    <property type="molecule type" value="Genomic_DNA"/>
</dbReference>
<dbReference type="EMBL" id="BC008596">
    <property type="protein sequence ID" value="AAH08596.1"/>
    <property type="molecule type" value="mRNA"/>
</dbReference>
<dbReference type="CCDS" id="CCDS9002.1">
    <molecule id="Q96HH6-1"/>
</dbReference>
<dbReference type="RefSeq" id="NP_060749.2">
    <molecule id="Q96HH6-1"/>
    <property type="nucleotide sequence ID" value="NM_018279.3"/>
</dbReference>
<dbReference type="BioGRID" id="120555">
    <property type="interactions" value="43"/>
</dbReference>
<dbReference type="FunCoup" id="Q96HH6">
    <property type="interactions" value="199"/>
</dbReference>
<dbReference type="IntAct" id="Q96HH6">
    <property type="interactions" value="39"/>
</dbReference>
<dbReference type="MINT" id="Q96HH6"/>
<dbReference type="STRING" id="9606.ENSP00000266673"/>
<dbReference type="iPTMnet" id="Q96HH6"/>
<dbReference type="PhosphoSitePlus" id="Q96HH6"/>
<dbReference type="BioMuta" id="TMEM19"/>
<dbReference type="DMDM" id="74731932"/>
<dbReference type="jPOST" id="Q96HH6"/>
<dbReference type="MassIVE" id="Q96HH6"/>
<dbReference type="PaxDb" id="9606-ENSP00000266673"/>
<dbReference type="PeptideAtlas" id="Q96HH6"/>
<dbReference type="ProteomicsDB" id="76747">
    <molecule id="Q96HH6-1"/>
</dbReference>
<dbReference type="ProteomicsDB" id="76748">
    <molecule id="Q96HH6-2"/>
</dbReference>
<dbReference type="Pumba" id="Q96HH6"/>
<dbReference type="Antibodypedia" id="17095">
    <property type="antibodies" value="34 antibodies from 10 providers"/>
</dbReference>
<dbReference type="DNASU" id="55266"/>
<dbReference type="Ensembl" id="ENST00000266673.10">
    <molecule id="Q96HH6-1"/>
    <property type="protein sequence ID" value="ENSP00000266673.5"/>
    <property type="gene ID" value="ENSG00000139291.14"/>
</dbReference>
<dbReference type="Ensembl" id="ENST00000549735.5">
    <molecule id="Q96HH6-2"/>
    <property type="protein sequence ID" value="ENSP00000449955.1"/>
    <property type="gene ID" value="ENSG00000139291.14"/>
</dbReference>
<dbReference type="GeneID" id="55266"/>
<dbReference type="KEGG" id="hsa:55266"/>
<dbReference type="MANE-Select" id="ENST00000266673.10">
    <property type="protein sequence ID" value="ENSP00000266673.5"/>
    <property type="RefSeq nucleotide sequence ID" value="NM_018279.4"/>
    <property type="RefSeq protein sequence ID" value="NP_060749.2"/>
</dbReference>
<dbReference type="UCSC" id="uc001sws.4">
    <molecule id="Q96HH6-1"/>
    <property type="organism name" value="human"/>
</dbReference>
<dbReference type="AGR" id="HGNC:25605"/>
<dbReference type="CTD" id="55266"/>
<dbReference type="DisGeNET" id="55266"/>
<dbReference type="GeneCards" id="TMEM19"/>
<dbReference type="HGNC" id="HGNC:25605">
    <property type="gene designation" value="TMEM19"/>
</dbReference>
<dbReference type="HPA" id="ENSG00000139291">
    <property type="expression patterns" value="Low tissue specificity"/>
</dbReference>
<dbReference type="neXtProt" id="NX_Q96HH6"/>
<dbReference type="OpenTargets" id="ENSG00000139291"/>
<dbReference type="PharmGKB" id="PA134909388"/>
<dbReference type="VEuPathDB" id="HostDB:ENSG00000139291"/>
<dbReference type="eggNOG" id="KOG4491">
    <property type="taxonomic scope" value="Eukaryota"/>
</dbReference>
<dbReference type="GeneTree" id="ENSGT00390000017998"/>
<dbReference type="HOGENOM" id="CLU_036918_3_1_1"/>
<dbReference type="InParanoid" id="Q96HH6"/>
<dbReference type="OMA" id="MSSFACC"/>
<dbReference type="OrthoDB" id="30881at2759"/>
<dbReference type="PAN-GO" id="Q96HH6">
    <property type="GO annotations" value="1 GO annotation based on evolutionary models"/>
</dbReference>
<dbReference type="PhylomeDB" id="Q96HH6"/>
<dbReference type="TreeFam" id="TF300063"/>
<dbReference type="PathwayCommons" id="Q96HH6"/>
<dbReference type="SignaLink" id="Q96HH6"/>
<dbReference type="BioGRID-ORCS" id="55266">
    <property type="hits" value="9 hits in 1157 CRISPR screens"/>
</dbReference>
<dbReference type="GenomeRNAi" id="55266"/>
<dbReference type="Pharos" id="Q96HH6">
    <property type="development level" value="Tdark"/>
</dbReference>
<dbReference type="PRO" id="PR:Q96HH6"/>
<dbReference type="Proteomes" id="UP000005640">
    <property type="component" value="Chromosome 12"/>
</dbReference>
<dbReference type="RNAct" id="Q96HH6">
    <property type="molecule type" value="protein"/>
</dbReference>
<dbReference type="Bgee" id="ENSG00000139291">
    <property type="expression patterns" value="Expressed in ileal mucosa and 186 other cell types or tissues"/>
</dbReference>
<dbReference type="ExpressionAtlas" id="Q96HH6">
    <property type="expression patterns" value="baseline and differential"/>
</dbReference>
<dbReference type="GO" id="GO:0016020">
    <property type="term" value="C:membrane"/>
    <property type="evidence" value="ECO:0000318"/>
    <property type="project" value="GO_Central"/>
</dbReference>
<dbReference type="InterPro" id="IPR002794">
    <property type="entry name" value="DUF92_TMEM19"/>
</dbReference>
<dbReference type="PANTHER" id="PTHR13353">
    <property type="entry name" value="TRANSMEMBRANE PROTEIN 19"/>
    <property type="match status" value="1"/>
</dbReference>
<dbReference type="PANTHER" id="PTHR13353:SF5">
    <property type="entry name" value="TRANSMEMBRANE PROTEIN 19"/>
    <property type="match status" value="1"/>
</dbReference>
<dbReference type="Pfam" id="PF01940">
    <property type="entry name" value="DUF92"/>
    <property type="match status" value="1"/>
</dbReference>
<sequence>MTDLNDNICKRYIKMITNIVILSLIICISLAFWIISMTASTYYGNLRPISPWRWLFSVVVPVLIVSNGLKKKSLDHSGALGGLVVGFILTIANFSFFTSLLMFFLSSSKLTKWKGEVKKRLDSEYKEGGQRNWVQVFCNGAVPTELALLYMIENGPGEIPVDFSKQYSASWMCLSLLAALACSAGDTWASEVGPVLSKSSPRLITTWEKVPVGTNGGVTVVGLVSSLLGGTFVGIAYFLTQLIFVNDLDISAPQWPIIAFGGLAGLLGSIVDSYLGATMQYTGLDESTGMVVNSPTNKARHIAGKPILDNNAVNLFSSVLIALLLPTAAWGFWPRG</sequence>
<comment type="interaction">
    <interactant intactId="EBI-741829">
        <id>Q96HH6</id>
    </interactant>
    <interactant intactId="EBI-3936819">
        <id>Q6Q788</id>
        <label>APOA5</label>
    </interactant>
    <organismsDiffer>false</organismsDiffer>
    <experiments>3</experiments>
</comment>
<comment type="interaction">
    <interactant intactId="EBI-741829">
        <id>Q96HH6</id>
    </interactant>
    <interactant intactId="EBI-13059134">
        <id>Q13520</id>
        <label>AQP6</label>
    </interactant>
    <organismsDiffer>false</organismsDiffer>
    <experiments>3</experiments>
</comment>
<comment type="interaction">
    <interactant intactId="EBI-741829">
        <id>Q96HH6</id>
    </interactant>
    <interactant intactId="EBI-11532900">
        <id>J3KQ12</id>
        <label>BSCL2</label>
    </interactant>
    <organismsDiffer>false</organismsDiffer>
    <experiments>6</experiments>
</comment>
<comment type="interaction">
    <interactant intactId="EBI-741829">
        <id>Q96HH6</id>
    </interactant>
    <interactant intactId="EBI-741806">
        <id>Q96G97</id>
        <label>BSCL2</label>
    </interactant>
    <organismsDiffer>false</organismsDiffer>
    <experiments>4</experiments>
</comment>
<comment type="interaction">
    <interactant intactId="EBI-741829">
        <id>Q96HH6</id>
    </interactant>
    <interactant intactId="EBI-10178113">
        <id>Q96G97-4</id>
        <label>BSCL2</label>
    </interactant>
    <organismsDiffer>false</organismsDiffer>
    <experiments>4</experiments>
</comment>
<comment type="interaction">
    <interactant intactId="EBI-741829">
        <id>Q96HH6</id>
    </interactant>
    <interactant intactId="EBI-13381098">
        <id>Q8IYJ2-2</id>
        <label>C10orf67</label>
    </interactant>
    <organismsDiffer>false</organismsDiffer>
    <experiments>3</experiments>
</comment>
<comment type="interaction">
    <interactant intactId="EBI-741829">
        <id>Q96HH6</id>
    </interactant>
    <interactant intactId="EBI-3862428">
        <id>P09693</id>
        <label>CD3G</label>
    </interactant>
    <organismsDiffer>false</organismsDiffer>
    <experiments>3</experiments>
</comment>
<comment type="interaction">
    <interactant intactId="EBI-741829">
        <id>Q96HH6</id>
    </interactant>
    <interactant intactId="EBI-7797864">
        <id>P11912</id>
        <label>CD79A</label>
    </interactant>
    <organismsDiffer>false</organismsDiffer>
    <experiments>3</experiments>
</comment>
<comment type="interaction">
    <interactant intactId="EBI-741829">
        <id>Q96HH6</id>
    </interactant>
    <interactant intactId="EBI-2835940">
        <id>P34972</id>
        <label>CNR2</label>
    </interactant>
    <organismsDiffer>false</organismsDiffer>
    <experiments>3</experiments>
</comment>
<comment type="interaction">
    <interactant intactId="EBI-741829">
        <id>Q96HH6</id>
    </interactant>
    <interactant intactId="EBI-18013275">
        <id>Q7Z7G2</id>
        <label>CPLX4</label>
    </interactant>
    <organismsDiffer>false</organismsDiffer>
    <experiments>3</experiments>
</comment>
<comment type="interaction">
    <interactant intactId="EBI-741829">
        <id>Q96HH6</id>
    </interactant>
    <interactant intactId="EBI-6942903">
        <id>Q96BA8</id>
        <label>CREB3L1</label>
    </interactant>
    <organismsDiffer>false</organismsDiffer>
    <experiments>3</experiments>
</comment>
<comment type="interaction">
    <interactant intactId="EBI-741829">
        <id>Q96HH6</id>
    </interactant>
    <interactant intactId="EBI-18535450">
        <id>Q9GZR5</id>
        <label>ELOVL4</label>
    </interactant>
    <organismsDiffer>false</organismsDiffer>
    <experiments>3</experiments>
</comment>
<comment type="interaction">
    <interactant intactId="EBI-741829">
        <id>Q96HH6</id>
    </interactant>
    <interactant intactId="EBI-18938272">
        <id>Q96KR6</id>
        <label>FAM210B</label>
    </interactant>
    <organismsDiffer>false</organismsDiffer>
    <experiments>3</experiments>
</comment>
<comment type="interaction">
    <interactant intactId="EBI-741829">
        <id>Q96HH6</id>
    </interactant>
    <interactant intactId="EBI-17565645">
        <id>P08034</id>
        <label>GJB1</label>
    </interactant>
    <organismsDiffer>false</organismsDiffer>
    <experiments>3</experiments>
</comment>
<comment type="interaction">
    <interactant intactId="EBI-741829">
        <id>Q96HH6</id>
    </interactant>
    <interactant intactId="EBI-3917143">
        <id>Q5T7V8</id>
        <label>GORAB</label>
    </interactant>
    <organismsDiffer>false</organismsDiffer>
    <experiments>3</experiments>
</comment>
<comment type="interaction">
    <interactant intactId="EBI-741829">
        <id>Q96HH6</id>
    </interactant>
    <interactant intactId="EBI-18076404">
        <id>O15529</id>
        <label>GPR42</label>
    </interactant>
    <organismsDiffer>false</organismsDiffer>
    <experiments>3</experiments>
</comment>
<comment type="interaction">
    <interactant intactId="EBI-741829">
        <id>Q96HH6</id>
    </interactant>
    <interactant intactId="EBI-13067820">
        <id>Q9NZD1</id>
        <label>GPRC5D</label>
    </interactant>
    <organismsDiffer>false</organismsDiffer>
    <experiments>3</experiments>
</comment>
<comment type="interaction">
    <interactant intactId="EBI-741829">
        <id>Q96HH6</id>
    </interactant>
    <interactant intactId="EBI-11721746">
        <id>Q8TED1</id>
        <label>GPX8</label>
    </interactant>
    <organismsDiffer>false</organismsDiffer>
    <experiments>3</experiments>
</comment>
<comment type="interaction">
    <interactant intactId="EBI-741829">
        <id>Q96HH6</id>
    </interactant>
    <interactant intactId="EBI-18053395">
        <id>Q7Z5P4</id>
        <label>HSD17B13</label>
    </interactant>
    <organismsDiffer>false</organismsDiffer>
    <experiments>3</experiments>
</comment>
<comment type="interaction">
    <interactant intactId="EBI-741829">
        <id>Q96HH6</id>
    </interactant>
    <interactant intactId="EBI-749265">
        <id>Q8N6L0</id>
        <label>KASH5</label>
    </interactant>
    <organismsDiffer>false</organismsDiffer>
    <experiments>3</experiments>
</comment>
<comment type="interaction">
    <interactant intactId="EBI-741829">
        <id>Q96HH6</id>
    </interactant>
    <interactant intactId="EBI-7055862">
        <id>Q96B96</id>
        <label>LDAF1</label>
    </interactant>
    <organismsDiffer>false</organismsDiffer>
    <experiments>3</experiments>
</comment>
<comment type="interaction">
    <interactant intactId="EBI-741829">
        <id>Q96HH6</id>
    </interactant>
    <interactant intactId="EBI-750776">
        <id>O95214</id>
        <label>LEPROTL1</label>
    </interactant>
    <organismsDiffer>false</organismsDiffer>
    <experiments>3</experiments>
</comment>
<comment type="interaction">
    <interactant intactId="EBI-741829">
        <id>Q96HH6</id>
    </interactant>
    <interactant intactId="EBI-18234679">
        <id>Q16553</id>
        <label>LY6E</label>
    </interactant>
    <organismsDiffer>false</organismsDiffer>
    <experiments>3</experiments>
</comment>
<comment type="interaction">
    <interactant intactId="EBI-741829">
        <id>Q96HH6</id>
    </interactant>
    <interactant intactId="EBI-373355">
        <id>Q5SR56</id>
        <label>MFSD14B</label>
    </interactant>
    <organismsDiffer>false</organismsDiffer>
    <experiments>3</experiments>
</comment>
<comment type="interaction">
    <interactant intactId="EBI-741829">
        <id>Q96HH6</id>
    </interactant>
    <interactant intactId="EBI-1050125">
        <id>O15173</id>
        <label>PGRMC2</label>
    </interactant>
    <organismsDiffer>false</organismsDiffer>
    <experiments>3</experiments>
</comment>
<comment type="interaction">
    <interactant intactId="EBI-741829">
        <id>Q96HH6</id>
    </interactant>
    <interactant intactId="EBI-17630288">
        <id>P57054</id>
        <label>PIGP</label>
    </interactant>
    <organismsDiffer>false</organismsDiffer>
    <experiments>3</experiments>
</comment>
<comment type="interaction">
    <interactant intactId="EBI-741829">
        <id>Q96HH6</id>
    </interactant>
    <interactant intactId="EBI-11161398">
        <id>O14684</id>
        <label>PTGES</label>
    </interactant>
    <organismsDiffer>false</organismsDiffer>
    <experiments>3</experiments>
</comment>
<comment type="interaction">
    <interactant intactId="EBI-741829">
        <id>Q96HH6</id>
    </interactant>
    <interactant intactId="EBI-7545592">
        <id>Q9H6H4</id>
        <label>REEP4</label>
    </interactant>
    <organismsDiffer>false</organismsDiffer>
    <experiments>3</experiments>
</comment>
<comment type="interaction">
    <interactant intactId="EBI-741829">
        <id>Q96HH6</id>
    </interactant>
    <interactant intactId="EBI-2340249">
        <id>Q96GF1</id>
        <label>RNF185</label>
    </interactant>
    <organismsDiffer>false</organismsDiffer>
    <experiments>3</experiments>
</comment>
<comment type="interaction">
    <interactant intactId="EBI-741829">
        <id>Q96HH6</id>
    </interactant>
    <interactant intactId="EBI-17284533">
        <id>A2A2V5</id>
        <label>SERTM1</label>
    </interactant>
    <organismsDiffer>false</organismsDiffer>
    <experiments>3</experiments>
</comment>
<comment type="interaction">
    <interactant intactId="EBI-741829">
        <id>Q96HH6</id>
    </interactant>
    <interactant intactId="EBI-4289564">
        <id>P30825</id>
        <label>SLC7A1</label>
    </interactant>
    <organismsDiffer>false</organismsDiffer>
    <experiments>3</experiments>
</comment>
<comment type="interaction">
    <interactant intactId="EBI-741829">
        <id>Q96HH6</id>
    </interactant>
    <interactant intactId="EBI-2866213">
        <id>Q92537</id>
        <label>SUSD6</label>
    </interactant>
    <organismsDiffer>false</organismsDiffer>
    <experiments>3</experiments>
</comment>
<comment type="interaction">
    <interactant intactId="EBI-741829">
        <id>Q96HH6</id>
    </interactant>
    <interactant intactId="EBI-19027521">
        <id>Q8N6K0</id>
        <label>TEX29</label>
    </interactant>
    <organismsDiffer>false</organismsDiffer>
    <experiments>3</experiments>
</comment>
<comment type="interaction">
    <interactant intactId="EBI-741829">
        <id>Q96HH6</id>
    </interactant>
    <interactant intactId="EBI-12947623">
        <id>Q96MV1</id>
        <label>TLCD4</label>
    </interactant>
    <organismsDiffer>false</organismsDiffer>
    <experiments>3</experiments>
</comment>
<comment type="interaction">
    <interactant intactId="EBI-741829">
        <id>Q96HH6</id>
    </interactant>
    <interactant intactId="EBI-7238458">
        <id>Q8IV31</id>
        <label>TMEM139</label>
    </interactant>
    <organismsDiffer>false</organismsDiffer>
    <experiments>3</experiments>
</comment>
<comment type="interaction">
    <interactant intactId="EBI-741829">
        <id>Q96HH6</id>
    </interactant>
    <interactant intactId="EBI-8638294">
        <id>Q9NUH8</id>
        <label>TMEM14B</label>
    </interactant>
    <organismsDiffer>false</organismsDiffer>
    <experiments>3</experiments>
</comment>
<comment type="interaction">
    <interactant intactId="EBI-741829">
        <id>Q96HH6</id>
    </interactant>
    <interactant intactId="EBI-10823938">
        <id>Q9NWC5</id>
        <label>TMEM45A</label>
    </interactant>
    <organismsDiffer>false</organismsDiffer>
    <experiments>3</experiments>
</comment>
<comment type="subcellular location">
    <subcellularLocation>
        <location evidence="3">Membrane</location>
        <topology evidence="3">Multi-pass membrane protein</topology>
    </subcellularLocation>
</comment>
<comment type="alternative products">
    <event type="alternative splicing"/>
    <isoform>
        <id>Q96HH6-1</id>
        <name>1</name>
        <sequence type="displayed"/>
    </isoform>
    <isoform>
        <id>Q96HH6-2</id>
        <name>2</name>
        <sequence type="described" ref="VSP_024659 VSP_024660"/>
    </isoform>
</comment>
<comment type="similarity">
    <text evidence="3">Belongs to the TMEM19 family.</text>
</comment>
<name>TMM19_HUMAN</name>
<feature type="chain" id="PRO_0000284794" description="Transmembrane protein 19">
    <location>
        <begin position="1"/>
        <end position="336"/>
    </location>
</feature>
<feature type="transmembrane region" description="Helical" evidence="1">
    <location>
        <begin position="15"/>
        <end position="35"/>
    </location>
</feature>
<feature type="transmembrane region" description="Helical" evidence="1">
    <location>
        <begin position="49"/>
        <end position="69"/>
    </location>
</feature>
<feature type="transmembrane region" description="Helical" evidence="1">
    <location>
        <begin position="84"/>
        <end position="104"/>
    </location>
</feature>
<feature type="transmembrane region" description="Helical" evidence="1">
    <location>
        <begin position="218"/>
        <end position="238"/>
    </location>
</feature>
<feature type="transmembrane region" description="Helical" evidence="1">
    <location>
        <begin position="257"/>
        <end position="277"/>
    </location>
</feature>
<feature type="transmembrane region" description="Helical" evidence="1">
    <location>
        <begin position="313"/>
        <end position="333"/>
    </location>
</feature>
<feature type="splice variant" id="VSP_024659" description="In isoform 2." evidence="2">
    <original>LDESTGMVVNSPTNK</original>
    <variation>KNIPSFLQLIGMLKK</variation>
    <location>
        <begin position="284"/>
        <end position="298"/>
    </location>
</feature>
<feature type="splice variant" id="VSP_024660" description="In isoform 2." evidence="2">
    <location>
        <begin position="299"/>
        <end position="336"/>
    </location>
</feature>
<feature type="sequence conflict" description="In Ref. 1; BAA91918." evidence="3" ref="1">
    <original>V</original>
    <variation>A</variation>
    <location>
        <position position="58"/>
    </location>
</feature>
<feature type="sequence conflict" description="In Ref. 2; BAD96868." evidence="3" ref="2">
    <original>V</original>
    <variation>L</variation>
    <location>
        <position position="58"/>
    </location>
</feature>
<feature type="sequence conflict" description="In Ref. 2; BAD96868." evidence="3" ref="2">
    <original>A</original>
    <variation>V</variation>
    <location>
        <position position="178"/>
    </location>
</feature>
<evidence type="ECO:0000255" key="1"/>
<evidence type="ECO:0000303" key="2">
    <source>
    </source>
</evidence>
<evidence type="ECO:0000305" key="3"/>